<evidence type="ECO:0000255" key="1">
    <source>
        <dbReference type="HAMAP-Rule" id="MF_00074"/>
    </source>
</evidence>
<name>RSMG_CLOPS</name>
<proteinExistence type="inferred from homology"/>
<feature type="chain" id="PRO_1000010139" description="Ribosomal RNA small subunit methyltransferase G">
    <location>
        <begin position="1"/>
        <end position="239"/>
    </location>
</feature>
<feature type="binding site" evidence="1">
    <location>
        <position position="78"/>
    </location>
    <ligand>
        <name>S-adenosyl-L-methionine</name>
        <dbReference type="ChEBI" id="CHEBI:59789"/>
    </ligand>
</feature>
<feature type="binding site" evidence="1">
    <location>
        <position position="83"/>
    </location>
    <ligand>
        <name>S-adenosyl-L-methionine</name>
        <dbReference type="ChEBI" id="CHEBI:59789"/>
    </ligand>
</feature>
<feature type="binding site" evidence="1">
    <location>
        <begin position="129"/>
        <end position="130"/>
    </location>
    <ligand>
        <name>S-adenosyl-L-methionine</name>
        <dbReference type="ChEBI" id="CHEBI:59789"/>
    </ligand>
</feature>
<feature type="binding site" evidence="1">
    <location>
        <position position="148"/>
    </location>
    <ligand>
        <name>S-adenosyl-L-methionine</name>
        <dbReference type="ChEBI" id="CHEBI:59789"/>
    </ligand>
</feature>
<gene>
    <name evidence="1" type="primary">rsmG</name>
    <name type="ordered locus">CPR_2667</name>
</gene>
<protein>
    <recommendedName>
        <fullName evidence="1">Ribosomal RNA small subunit methyltransferase G</fullName>
        <ecNumber evidence="1">2.1.1.-</ecNumber>
    </recommendedName>
    <alternativeName>
        <fullName evidence="1">16S rRNA 7-methylguanosine methyltransferase</fullName>
        <shortName evidence="1">16S rRNA m7G methyltransferase</shortName>
    </alternativeName>
</protein>
<comment type="function">
    <text evidence="1">Specifically methylates the N7 position of a guanine in 16S rRNA.</text>
</comment>
<comment type="subcellular location">
    <subcellularLocation>
        <location evidence="1">Cytoplasm</location>
    </subcellularLocation>
</comment>
<comment type="similarity">
    <text evidence="1">Belongs to the methyltransferase superfamily. RNA methyltransferase RsmG family.</text>
</comment>
<keyword id="KW-0963">Cytoplasm</keyword>
<keyword id="KW-0489">Methyltransferase</keyword>
<keyword id="KW-0698">rRNA processing</keyword>
<keyword id="KW-0949">S-adenosyl-L-methionine</keyword>
<keyword id="KW-0808">Transferase</keyword>
<dbReference type="EC" id="2.1.1.-" evidence="1"/>
<dbReference type="EMBL" id="CP000312">
    <property type="protein sequence ID" value="ABG87254.1"/>
    <property type="molecule type" value="Genomic_DNA"/>
</dbReference>
<dbReference type="RefSeq" id="WP_011593311.1">
    <property type="nucleotide sequence ID" value="NC_008262.1"/>
</dbReference>
<dbReference type="SMR" id="Q0SPQ5"/>
<dbReference type="KEGG" id="cpr:CPR_2667"/>
<dbReference type="Proteomes" id="UP000001824">
    <property type="component" value="Chromosome"/>
</dbReference>
<dbReference type="GO" id="GO:0005829">
    <property type="term" value="C:cytosol"/>
    <property type="evidence" value="ECO:0007669"/>
    <property type="project" value="TreeGrafter"/>
</dbReference>
<dbReference type="GO" id="GO:0070043">
    <property type="term" value="F:rRNA (guanine-N7-)-methyltransferase activity"/>
    <property type="evidence" value="ECO:0007669"/>
    <property type="project" value="UniProtKB-UniRule"/>
</dbReference>
<dbReference type="CDD" id="cd02440">
    <property type="entry name" value="AdoMet_MTases"/>
    <property type="match status" value="1"/>
</dbReference>
<dbReference type="FunFam" id="3.40.50.150:FF:000041">
    <property type="entry name" value="Ribosomal RNA small subunit methyltransferase G"/>
    <property type="match status" value="1"/>
</dbReference>
<dbReference type="Gene3D" id="3.40.50.150">
    <property type="entry name" value="Vaccinia Virus protein VP39"/>
    <property type="match status" value="1"/>
</dbReference>
<dbReference type="HAMAP" id="MF_00074">
    <property type="entry name" value="16SrRNA_methyltr_G"/>
    <property type="match status" value="1"/>
</dbReference>
<dbReference type="InterPro" id="IPR003682">
    <property type="entry name" value="rRNA_ssu_MeTfrase_G"/>
</dbReference>
<dbReference type="InterPro" id="IPR029063">
    <property type="entry name" value="SAM-dependent_MTases_sf"/>
</dbReference>
<dbReference type="NCBIfam" id="TIGR00138">
    <property type="entry name" value="rsmG_gidB"/>
    <property type="match status" value="1"/>
</dbReference>
<dbReference type="PANTHER" id="PTHR31760">
    <property type="entry name" value="S-ADENOSYL-L-METHIONINE-DEPENDENT METHYLTRANSFERASES SUPERFAMILY PROTEIN"/>
    <property type="match status" value="1"/>
</dbReference>
<dbReference type="PANTHER" id="PTHR31760:SF0">
    <property type="entry name" value="S-ADENOSYL-L-METHIONINE-DEPENDENT METHYLTRANSFERASES SUPERFAMILY PROTEIN"/>
    <property type="match status" value="1"/>
</dbReference>
<dbReference type="Pfam" id="PF02527">
    <property type="entry name" value="GidB"/>
    <property type="match status" value="1"/>
</dbReference>
<dbReference type="PIRSF" id="PIRSF003078">
    <property type="entry name" value="GidB"/>
    <property type="match status" value="1"/>
</dbReference>
<dbReference type="SUPFAM" id="SSF53335">
    <property type="entry name" value="S-adenosyl-L-methionine-dependent methyltransferases"/>
    <property type="match status" value="1"/>
</dbReference>
<accession>Q0SPQ5</accession>
<sequence length="239" mass="26901">MQYFDLMKKACDSVGMEFNEDKYQKFMLYKDLLKEWNEKINLTAITEDEEIVKKHFIDCIKAFKADEFKKAKTVIDVGTGAGFPGLPIAIMREDVEVTLLDSLNKRINFLNEVVNKLALKNVETIHSRAEDGARKKELRENFDIATSRAVANMCVLSEFCIPYVKVNGNFIALKGPNITEELNDSKNAIGTLGGKLKGITEVEIEGTDLNHNLVIVDKIKSTPKTFPRKAGNVTKKPLK</sequence>
<organism>
    <name type="scientific">Clostridium perfringens (strain SM101 / Type A)</name>
    <dbReference type="NCBI Taxonomy" id="289380"/>
    <lineage>
        <taxon>Bacteria</taxon>
        <taxon>Bacillati</taxon>
        <taxon>Bacillota</taxon>
        <taxon>Clostridia</taxon>
        <taxon>Eubacteriales</taxon>
        <taxon>Clostridiaceae</taxon>
        <taxon>Clostridium</taxon>
    </lineage>
</organism>
<reference key="1">
    <citation type="journal article" date="2006" name="Genome Res.">
        <title>Skewed genomic variability in strains of the toxigenic bacterial pathogen, Clostridium perfringens.</title>
        <authorList>
            <person name="Myers G.S.A."/>
            <person name="Rasko D.A."/>
            <person name="Cheung J.K."/>
            <person name="Ravel J."/>
            <person name="Seshadri R."/>
            <person name="DeBoy R.T."/>
            <person name="Ren Q."/>
            <person name="Varga J."/>
            <person name="Awad M.M."/>
            <person name="Brinkac L.M."/>
            <person name="Daugherty S.C."/>
            <person name="Haft D.H."/>
            <person name="Dodson R.J."/>
            <person name="Madupu R."/>
            <person name="Nelson W.C."/>
            <person name="Rosovitz M.J."/>
            <person name="Sullivan S.A."/>
            <person name="Khouri H."/>
            <person name="Dimitrov G.I."/>
            <person name="Watkins K.L."/>
            <person name="Mulligan S."/>
            <person name="Benton J."/>
            <person name="Radune D."/>
            <person name="Fisher D.J."/>
            <person name="Atkins H.S."/>
            <person name="Hiscox T."/>
            <person name="Jost B.H."/>
            <person name="Billington S.J."/>
            <person name="Songer J.G."/>
            <person name="McClane B.A."/>
            <person name="Titball R.W."/>
            <person name="Rood J.I."/>
            <person name="Melville S.B."/>
            <person name="Paulsen I.T."/>
        </authorList>
    </citation>
    <scope>NUCLEOTIDE SEQUENCE [LARGE SCALE GENOMIC DNA]</scope>
    <source>
        <strain>SM101 / Type A</strain>
    </source>
</reference>